<accession>Q58550</accession>
<comment type="similarity">
    <text evidence="1">Belongs to the UPF0215 family.</text>
</comment>
<proteinExistence type="inferred from homology"/>
<protein>
    <recommendedName>
        <fullName evidence="1">UPF0215 protein MJ1150</fullName>
    </recommendedName>
</protein>
<evidence type="ECO:0000255" key="1">
    <source>
        <dbReference type="HAMAP-Rule" id="MF_00582"/>
    </source>
</evidence>
<organism>
    <name type="scientific">Methanocaldococcus jannaschii (strain ATCC 43067 / DSM 2661 / JAL-1 / JCM 10045 / NBRC 100440)</name>
    <name type="common">Methanococcus jannaschii</name>
    <dbReference type="NCBI Taxonomy" id="243232"/>
    <lineage>
        <taxon>Archaea</taxon>
        <taxon>Methanobacteriati</taxon>
        <taxon>Methanobacteriota</taxon>
        <taxon>Methanomada group</taxon>
        <taxon>Methanococci</taxon>
        <taxon>Methanococcales</taxon>
        <taxon>Methanocaldococcaceae</taxon>
        <taxon>Methanocaldococcus</taxon>
    </lineage>
</organism>
<gene>
    <name type="ordered locus">MJ1150</name>
</gene>
<feature type="chain" id="PRO_0000149233" description="UPF0215 protein MJ1150">
    <location>
        <begin position="1"/>
        <end position="184"/>
    </location>
</feature>
<sequence>MVLMKDEVEVIGFDDAPFNKADKVCILIGTYMRGNRIIDGIYFRKFKKDGMDVTEKIIDIVKEKHYKKIKVIFLAGITFGGFNIADLWEINKETEKPVIVVIDKYPNKEKIFLALKKYFDDADERIKLINSFPEPEKMENIYVQYVGADKEFVKNVIKKTKLKSKIPECLRISHLIGRGFLGLR</sequence>
<reference key="1">
    <citation type="journal article" date="1996" name="Science">
        <title>Complete genome sequence of the methanogenic archaeon, Methanococcus jannaschii.</title>
        <authorList>
            <person name="Bult C.J."/>
            <person name="White O."/>
            <person name="Olsen G.J."/>
            <person name="Zhou L."/>
            <person name="Fleischmann R.D."/>
            <person name="Sutton G.G."/>
            <person name="Blake J.A."/>
            <person name="FitzGerald L.M."/>
            <person name="Clayton R.A."/>
            <person name="Gocayne J.D."/>
            <person name="Kerlavage A.R."/>
            <person name="Dougherty B.A."/>
            <person name="Tomb J.-F."/>
            <person name="Adams M.D."/>
            <person name="Reich C.I."/>
            <person name="Overbeek R."/>
            <person name="Kirkness E.F."/>
            <person name="Weinstock K.G."/>
            <person name="Merrick J.M."/>
            <person name="Glodek A."/>
            <person name="Scott J.L."/>
            <person name="Geoghagen N.S.M."/>
            <person name="Weidman J.F."/>
            <person name="Fuhrmann J.L."/>
            <person name="Nguyen D."/>
            <person name="Utterback T.R."/>
            <person name="Kelley J.M."/>
            <person name="Peterson J.D."/>
            <person name="Sadow P.W."/>
            <person name="Hanna M.C."/>
            <person name="Cotton M.D."/>
            <person name="Roberts K.M."/>
            <person name="Hurst M.A."/>
            <person name="Kaine B.P."/>
            <person name="Borodovsky M."/>
            <person name="Klenk H.-P."/>
            <person name="Fraser C.M."/>
            <person name="Smith H.O."/>
            <person name="Woese C.R."/>
            <person name="Venter J.C."/>
        </authorList>
    </citation>
    <scope>NUCLEOTIDE SEQUENCE [LARGE SCALE GENOMIC DNA]</scope>
    <source>
        <strain>ATCC 43067 / DSM 2661 / JAL-1 / JCM 10045 / NBRC 100440</strain>
    </source>
</reference>
<keyword id="KW-1185">Reference proteome</keyword>
<dbReference type="EMBL" id="L77117">
    <property type="protein sequence ID" value="AAB99150.1"/>
    <property type="molecule type" value="Genomic_DNA"/>
</dbReference>
<dbReference type="PIR" id="E64443">
    <property type="entry name" value="E64443"/>
</dbReference>
<dbReference type="SMR" id="Q58550"/>
<dbReference type="STRING" id="243232.MJ_1150"/>
<dbReference type="PaxDb" id="243232-MJ_1150"/>
<dbReference type="EnsemblBacteria" id="AAB99150">
    <property type="protein sequence ID" value="AAB99150"/>
    <property type="gene ID" value="MJ_1150"/>
</dbReference>
<dbReference type="KEGG" id="mja:MJ_1150"/>
<dbReference type="eggNOG" id="arCOG00928">
    <property type="taxonomic scope" value="Archaea"/>
</dbReference>
<dbReference type="HOGENOM" id="CLU_095956_1_0_2"/>
<dbReference type="InParanoid" id="Q58550"/>
<dbReference type="PhylomeDB" id="Q58550"/>
<dbReference type="Proteomes" id="UP000000805">
    <property type="component" value="Chromosome"/>
</dbReference>
<dbReference type="Gene3D" id="3.30.2170.10">
    <property type="entry name" value="archaeoglobus fulgidus dsm 4304 superfamily"/>
    <property type="match status" value="1"/>
</dbReference>
<dbReference type="HAMAP" id="MF_00582">
    <property type="entry name" value="UPF0215"/>
    <property type="match status" value="1"/>
</dbReference>
<dbReference type="InterPro" id="IPR002802">
    <property type="entry name" value="Endo_dU"/>
</dbReference>
<dbReference type="PANTHER" id="PTHR39518">
    <property type="entry name" value="UPF0215 PROTEIN MJ1150"/>
    <property type="match status" value="1"/>
</dbReference>
<dbReference type="PANTHER" id="PTHR39518:SF2">
    <property type="entry name" value="UPF0215 PROTEIN MJ1150"/>
    <property type="match status" value="1"/>
</dbReference>
<dbReference type="Pfam" id="PF01949">
    <property type="entry name" value="DUF99"/>
    <property type="match status" value="1"/>
</dbReference>
<dbReference type="PIRSF" id="PIRSF006380">
    <property type="entry name" value="UCP006380"/>
    <property type="match status" value="1"/>
</dbReference>
<name>Y1150_METJA</name>